<sequence length="159" mass="18344">MSRRHAAEKRVILPDMKYNSILLSRFINNIMKEGKKALAEKIVYSAFNKIEKKHRVDPYQTFNNAMHNVKPHLEVTSVRVGGANYQVPTHVDERRGYTLASRWIINAASKRSEKMMIDKLAEELFEASNNRGVAIKKKEDTHKMAEANKAFSHFSPKKM</sequence>
<dbReference type="EMBL" id="CP000053">
    <property type="protein sequence ID" value="AAY62005.1"/>
    <property type="molecule type" value="Genomic_DNA"/>
</dbReference>
<dbReference type="SMR" id="Q4UKC6"/>
<dbReference type="STRING" id="315456.RF_1154"/>
<dbReference type="KEGG" id="rfe:RF_1154"/>
<dbReference type="eggNOG" id="COG0049">
    <property type="taxonomic scope" value="Bacteria"/>
</dbReference>
<dbReference type="HOGENOM" id="CLU_072226_1_1_5"/>
<dbReference type="OrthoDB" id="9807653at2"/>
<dbReference type="Proteomes" id="UP000008548">
    <property type="component" value="Chromosome"/>
</dbReference>
<dbReference type="GO" id="GO:0015935">
    <property type="term" value="C:small ribosomal subunit"/>
    <property type="evidence" value="ECO:0007669"/>
    <property type="project" value="InterPro"/>
</dbReference>
<dbReference type="GO" id="GO:0019843">
    <property type="term" value="F:rRNA binding"/>
    <property type="evidence" value="ECO:0007669"/>
    <property type="project" value="UniProtKB-UniRule"/>
</dbReference>
<dbReference type="GO" id="GO:0003735">
    <property type="term" value="F:structural constituent of ribosome"/>
    <property type="evidence" value="ECO:0007669"/>
    <property type="project" value="InterPro"/>
</dbReference>
<dbReference type="GO" id="GO:0000049">
    <property type="term" value="F:tRNA binding"/>
    <property type="evidence" value="ECO:0007669"/>
    <property type="project" value="UniProtKB-UniRule"/>
</dbReference>
<dbReference type="GO" id="GO:0006412">
    <property type="term" value="P:translation"/>
    <property type="evidence" value="ECO:0007669"/>
    <property type="project" value="UniProtKB-UniRule"/>
</dbReference>
<dbReference type="CDD" id="cd14869">
    <property type="entry name" value="uS7_Bacteria"/>
    <property type="match status" value="1"/>
</dbReference>
<dbReference type="FunFam" id="1.10.455.10:FF:000001">
    <property type="entry name" value="30S ribosomal protein S7"/>
    <property type="match status" value="1"/>
</dbReference>
<dbReference type="Gene3D" id="1.10.455.10">
    <property type="entry name" value="Ribosomal protein S7 domain"/>
    <property type="match status" value="1"/>
</dbReference>
<dbReference type="HAMAP" id="MF_00480_B">
    <property type="entry name" value="Ribosomal_uS7_B"/>
    <property type="match status" value="1"/>
</dbReference>
<dbReference type="InterPro" id="IPR000235">
    <property type="entry name" value="Ribosomal_uS7"/>
</dbReference>
<dbReference type="InterPro" id="IPR005717">
    <property type="entry name" value="Ribosomal_uS7_bac/org-type"/>
</dbReference>
<dbReference type="InterPro" id="IPR020606">
    <property type="entry name" value="Ribosomal_uS7_CS"/>
</dbReference>
<dbReference type="InterPro" id="IPR023798">
    <property type="entry name" value="Ribosomal_uS7_dom"/>
</dbReference>
<dbReference type="InterPro" id="IPR036823">
    <property type="entry name" value="Ribosomal_uS7_dom_sf"/>
</dbReference>
<dbReference type="NCBIfam" id="TIGR01029">
    <property type="entry name" value="rpsG_bact"/>
    <property type="match status" value="1"/>
</dbReference>
<dbReference type="PANTHER" id="PTHR11205">
    <property type="entry name" value="RIBOSOMAL PROTEIN S7"/>
    <property type="match status" value="1"/>
</dbReference>
<dbReference type="Pfam" id="PF00177">
    <property type="entry name" value="Ribosomal_S7"/>
    <property type="match status" value="1"/>
</dbReference>
<dbReference type="PIRSF" id="PIRSF002122">
    <property type="entry name" value="RPS7p_RPS7a_RPS5e_RPS7o"/>
    <property type="match status" value="1"/>
</dbReference>
<dbReference type="SUPFAM" id="SSF47973">
    <property type="entry name" value="Ribosomal protein S7"/>
    <property type="match status" value="1"/>
</dbReference>
<dbReference type="PROSITE" id="PS00052">
    <property type="entry name" value="RIBOSOMAL_S7"/>
    <property type="match status" value="1"/>
</dbReference>
<evidence type="ECO:0000255" key="1">
    <source>
        <dbReference type="HAMAP-Rule" id="MF_00480"/>
    </source>
</evidence>
<evidence type="ECO:0000305" key="2"/>
<accession>Q4UKC6</accession>
<name>RS7_RICFE</name>
<reference key="1">
    <citation type="journal article" date="2005" name="PLoS Biol.">
        <title>The genome sequence of Rickettsia felis identifies the first putative conjugative plasmid in an obligate intracellular parasite.</title>
        <authorList>
            <person name="Ogata H."/>
            <person name="Renesto P."/>
            <person name="Audic S."/>
            <person name="Robert C."/>
            <person name="Blanc G."/>
            <person name="Fournier P.-E."/>
            <person name="Parinello H."/>
            <person name="Claverie J.-M."/>
            <person name="Raoult D."/>
        </authorList>
    </citation>
    <scope>NUCLEOTIDE SEQUENCE [LARGE SCALE GENOMIC DNA]</scope>
    <source>
        <strain>ATCC VR-1525 / URRWXCal2</strain>
    </source>
</reference>
<keyword id="KW-0687">Ribonucleoprotein</keyword>
<keyword id="KW-0689">Ribosomal protein</keyword>
<keyword id="KW-0694">RNA-binding</keyword>
<keyword id="KW-0699">rRNA-binding</keyword>
<keyword id="KW-0820">tRNA-binding</keyword>
<comment type="function">
    <text evidence="1">One of the primary rRNA binding proteins, it binds directly to 16S rRNA where it nucleates assembly of the head domain of the 30S subunit. Is located at the subunit interface close to the decoding center, probably blocks exit of the E-site tRNA.</text>
</comment>
<comment type="subunit">
    <text evidence="1">Part of the 30S ribosomal subunit. Contacts proteins S9 and S11.</text>
</comment>
<comment type="similarity">
    <text evidence="1">Belongs to the universal ribosomal protein uS7 family.</text>
</comment>
<gene>
    <name evidence="1" type="primary">rpsG</name>
    <name type="ordered locus">RF_1154</name>
</gene>
<feature type="chain" id="PRO_0000226524" description="Small ribosomal subunit protein uS7">
    <location>
        <begin position="1"/>
        <end position="159"/>
    </location>
</feature>
<proteinExistence type="inferred from homology"/>
<organism>
    <name type="scientific">Rickettsia felis (strain ATCC VR-1525 / URRWXCal2)</name>
    <name type="common">Rickettsia azadi</name>
    <dbReference type="NCBI Taxonomy" id="315456"/>
    <lineage>
        <taxon>Bacteria</taxon>
        <taxon>Pseudomonadati</taxon>
        <taxon>Pseudomonadota</taxon>
        <taxon>Alphaproteobacteria</taxon>
        <taxon>Rickettsiales</taxon>
        <taxon>Rickettsiaceae</taxon>
        <taxon>Rickettsieae</taxon>
        <taxon>Rickettsia</taxon>
        <taxon>spotted fever group</taxon>
    </lineage>
</organism>
<protein>
    <recommendedName>
        <fullName evidence="1">Small ribosomal subunit protein uS7</fullName>
    </recommendedName>
    <alternativeName>
        <fullName evidence="2">30S ribosomal protein S7</fullName>
    </alternativeName>
</protein>